<evidence type="ECO:0000250" key="1"/>
<evidence type="ECO:0000256" key="2">
    <source>
        <dbReference type="SAM" id="MobiDB-lite"/>
    </source>
</evidence>
<evidence type="ECO:0000305" key="3"/>
<gene>
    <name type="primary">jip5</name>
    <name type="ORF">NCU06021</name>
</gene>
<accession>Q7S4F7</accession>
<accession>V5IKJ8</accession>
<proteinExistence type="inferred from homology"/>
<protein>
    <recommendedName>
        <fullName>WD repeat-containing protein jip5</fullName>
    </recommendedName>
</protein>
<reference key="1">
    <citation type="journal article" date="2003" name="Nature">
        <title>The genome sequence of the filamentous fungus Neurospora crassa.</title>
        <authorList>
            <person name="Galagan J.E."/>
            <person name="Calvo S.E."/>
            <person name="Borkovich K.A."/>
            <person name="Selker E.U."/>
            <person name="Read N.D."/>
            <person name="Jaffe D.B."/>
            <person name="FitzHugh W."/>
            <person name="Ma L.-J."/>
            <person name="Smirnov S."/>
            <person name="Purcell S."/>
            <person name="Rehman B."/>
            <person name="Elkins T."/>
            <person name="Engels R."/>
            <person name="Wang S."/>
            <person name="Nielsen C.B."/>
            <person name="Butler J."/>
            <person name="Endrizzi M."/>
            <person name="Qui D."/>
            <person name="Ianakiev P."/>
            <person name="Bell-Pedersen D."/>
            <person name="Nelson M.A."/>
            <person name="Werner-Washburne M."/>
            <person name="Selitrennikoff C.P."/>
            <person name="Kinsey J.A."/>
            <person name="Braun E.L."/>
            <person name="Zelter A."/>
            <person name="Schulte U."/>
            <person name="Kothe G.O."/>
            <person name="Jedd G."/>
            <person name="Mewes H.-W."/>
            <person name="Staben C."/>
            <person name="Marcotte E."/>
            <person name="Greenberg D."/>
            <person name="Roy A."/>
            <person name="Foley K."/>
            <person name="Naylor J."/>
            <person name="Stange-Thomann N."/>
            <person name="Barrett R."/>
            <person name="Gnerre S."/>
            <person name="Kamal M."/>
            <person name="Kamvysselis M."/>
            <person name="Mauceli E.W."/>
            <person name="Bielke C."/>
            <person name="Rudd S."/>
            <person name="Frishman D."/>
            <person name="Krystofova S."/>
            <person name="Rasmussen C."/>
            <person name="Metzenberg R.L."/>
            <person name="Perkins D.D."/>
            <person name="Kroken S."/>
            <person name="Cogoni C."/>
            <person name="Macino G."/>
            <person name="Catcheside D.E.A."/>
            <person name="Li W."/>
            <person name="Pratt R.J."/>
            <person name="Osmani S.A."/>
            <person name="DeSouza C.P.C."/>
            <person name="Glass N.L."/>
            <person name="Orbach M.J."/>
            <person name="Berglund J.A."/>
            <person name="Voelker R."/>
            <person name="Yarden O."/>
            <person name="Plamann M."/>
            <person name="Seiler S."/>
            <person name="Dunlap J.C."/>
            <person name="Radford A."/>
            <person name="Aramayo R."/>
            <person name="Natvig D.O."/>
            <person name="Alex L.A."/>
            <person name="Mannhaupt G."/>
            <person name="Ebbole D.J."/>
            <person name="Freitag M."/>
            <person name="Paulsen I."/>
            <person name="Sachs M.S."/>
            <person name="Lander E.S."/>
            <person name="Nusbaum C."/>
            <person name="Birren B.W."/>
        </authorList>
    </citation>
    <scope>NUCLEOTIDE SEQUENCE [LARGE SCALE GENOMIC DNA]</scope>
    <source>
        <strain>ATCC 24698 / 74-OR23-1A / CBS 708.71 / DSM 1257 / FGSC 987</strain>
    </source>
</reference>
<organism>
    <name type="scientific">Neurospora crassa (strain ATCC 24698 / 74-OR23-1A / CBS 708.71 / DSM 1257 / FGSC 987)</name>
    <dbReference type="NCBI Taxonomy" id="367110"/>
    <lineage>
        <taxon>Eukaryota</taxon>
        <taxon>Fungi</taxon>
        <taxon>Dikarya</taxon>
        <taxon>Ascomycota</taxon>
        <taxon>Pezizomycotina</taxon>
        <taxon>Sordariomycetes</taxon>
        <taxon>Sordariomycetidae</taxon>
        <taxon>Sordariales</taxon>
        <taxon>Sordariaceae</taxon>
        <taxon>Neurospora</taxon>
    </lineage>
</organism>
<name>JIP5_NEUCR</name>
<feature type="chain" id="PRO_0000333566" description="WD repeat-containing protein jip5">
    <location>
        <begin position="1"/>
        <end position="421"/>
    </location>
</feature>
<feature type="repeat" description="WD 1">
    <location>
        <begin position="9"/>
        <end position="48"/>
    </location>
</feature>
<feature type="repeat" description="WD 2">
    <location>
        <begin position="71"/>
        <end position="110"/>
    </location>
</feature>
<feature type="repeat" description="WD 3">
    <location>
        <begin position="120"/>
        <end position="159"/>
    </location>
</feature>
<feature type="repeat" description="WD 4">
    <location>
        <begin position="220"/>
        <end position="263"/>
    </location>
</feature>
<feature type="repeat" description="WD 5">
    <location>
        <begin position="277"/>
        <end position="317"/>
    </location>
</feature>
<feature type="repeat" description="WD 6">
    <location>
        <begin position="321"/>
        <end position="358"/>
    </location>
</feature>
<feature type="region of interest" description="Disordered" evidence="2">
    <location>
        <begin position="39"/>
        <end position="58"/>
    </location>
</feature>
<feature type="region of interest" description="Disordered" evidence="2">
    <location>
        <begin position="351"/>
        <end position="421"/>
    </location>
</feature>
<feature type="compositionally biased region" description="Acidic residues" evidence="2">
    <location>
        <begin position="44"/>
        <end position="53"/>
    </location>
</feature>
<feature type="compositionally biased region" description="Acidic residues" evidence="2">
    <location>
        <begin position="355"/>
        <end position="366"/>
    </location>
</feature>
<feature type="compositionally biased region" description="Acidic residues" evidence="2">
    <location>
        <begin position="378"/>
        <end position="388"/>
    </location>
</feature>
<feature type="compositionally biased region" description="Basic residues" evidence="2">
    <location>
        <begin position="395"/>
        <end position="410"/>
    </location>
</feature>
<comment type="subcellular location">
    <subcellularLocation>
        <location evidence="1">Nucleus</location>
        <location evidence="1">Nucleolus</location>
    </subcellularLocation>
</comment>
<comment type="similarity">
    <text evidence="3">Belongs to the WD repeat WDR55 family.</text>
</comment>
<sequence>MLENLCTLPLSADLFTQVVHPSKPLLTVGLSNGRVETFRIPTNEDSDDDEDENSSITGGKGVIKSVWSTHRHKGSCRTLTYSTDGESLYSAGTDSIVKHFSPETGVVISKIGLPPVNSTSSQSDTPAILHTLSPQTLLLGTDSGSLYIFDLRENGSLNPKPVRKHVPHSDYISSLTPLPPSSESTSGFPKQWVSTGGATLAVTDLRHGIMATSEDQEDELLCSTVIPTGLGPKHMRNNAVLAVGTGGGVLTLWDRGAWDDQQERIYVAPGETKRDGESLDAIVRVPDELGWGKKAVVGVGDGTVKIVDLKRREVQTTFQHDEVEGVAALNFDYENRLISGGGRTVKVWAEAGSAQEDEEEEEEVVEADQGVKRPAGSDDSDDDDGSDSDSDRPKRERKKKRRKGNKKGKHGGPSVSFPGLD</sequence>
<keyword id="KW-0539">Nucleus</keyword>
<keyword id="KW-1185">Reference proteome</keyword>
<keyword id="KW-0677">Repeat</keyword>
<keyword id="KW-0853">WD repeat</keyword>
<dbReference type="EMBL" id="CM002242">
    <property type="protein sequence ID" value="ESA41931.1"/>
    <property type="molecule type" value="Genomic_DNA"/>
</dbReference>
<dbReference type="EMBL" id="CM002242">
    <property type="protein sequence ID" value="ESA41932.1"/>
    <property type="molecule type" value="Genomic_DNA"/>
</dbReference>
<dbReference type="EMBL" id="CM002242">
    <property type="protein sequence ID" value="ESA41933.1"/>
    <property type="molecule type" value="Genomic_DNA"/>
</dbReference>
<dbReference type="RefSeq" id="XP_011395217.1">
    <property type="nucleotide sequence ID" value="XM_011396915.1"/>
</dbReference>
<dbReference type="RefSeq" id="XP_011395218.1">
    <property type="nucleotide sequence ID" value="XM_011396916.1"/>
</dbReference>
<dbReference type="RefSeq" id="XP_011395219.1">
    <property type="nucleotide sequence ID" value="XM_011396917.1"/>
</dbReference>
<dbReference type="SMR" id="Q7S4F7"/>
<dbReference type="FunCoup" id="Q7S4F7">
    <property type="interactions" value="96"/>
</dbReference>
<dbReference type="STRING" id="367110.Q7S4F7"/>
<dbReference type="PaxDb" id="5141-EFNCRP00000005299"/>
<dbReference type="EnsemblFungi" id="ESA41931">
    <property type="protein sequence ID" value="ESA41931"/>
    <property type="gene ID" value="NCU06021"/>
</dbReference>
<dbReference type="EnsemblFungi" id="ESA41932">
    <property type="protein sequence ID" value="ESA41932"/>
    <property type="gene ID" value="NCU06021"/>
</dbReference>
<dbReference type="EnsemblFungi" id="ESA41933">
    <property type="protein sequence ID" value="ESA41933"/>
    <property type="gene ID" value="NCU06021"/>
</dbReference>
<dbReference type="GeneID" id="3875770"/>
<dbReference type="KEGG" id="ncr:NCU06021"/>
<dbReference type="VEuPathDB" id="FungiDB:NCU06021"/>
<dbReference type="HOGENOM" id="CLU_052691_0_0_1"/>
<dbReference type="InParanoid" id="Q7S4F7"/>
<dbReference type="OMA" id="QAIHPTE"/>
<dbReference type="OrthoDB" id="2288928at2759"/>
<dbReference type="Proteomes" id="UP000001805">
    <property type="component" value="Chromosome 7, Linkage Group VII"/>
</dbReference>
<dbReference type="GO" id="GO:0005730">
    <property type="term" value="C:nucleolus"/>
    <property type="evidence" value="ECO:0007669"/>
    <property type="project" value="UniProtKB-SubCell"/>
</dbReference>
<dbReference type="Gene3D" id="2.130.10.10">
    <property type="entry name" value="YVTN repeat-like/Quinoprotein amine dehydrogenase"/>
    <property type="match status" value="1"/>
</dbReference>
<dbReference type="InterPro" id="IPR015943">
    <property type="entry name" value="WD40/YVTN_repeat-like_dom_sf"/>
</dbReference>
<dbReference type="InterPro" id="IPR036322">
    <property type="entry name" value="WD40_repeat_dom_sf"/>
</dbReference>
<dbReference type="InterPro" id="IPR001680">
    <property type="entry name" value="WD40_rpt"/>
</dbReference>
<dbReference type="InterPro" id="IPR050505">
    <property type="entry name" value="WDR55_POC1"/>
</dbReference>
<dbReference type="PANTHER" id="PTHR44019">
    <property type="entry name" value="WD REPEAT-CONTAINING PROTEIN 55"/>
    <property type="match status" value="1"/>
</dbReference>
<dbReference type="PANTHER" id="PTHR44019:SF20">
    <property type="entry name" value="WD REPEAT-CONTAINING PROTEIN 55"/>
    <property type="match status" value="1"/>
</dbReference>
<dbReference type="Pfam" id="PF00400">
    <property type="entry name" value="WD40"/>
    <property type="match status" value="1"/>
</dbReference>
<dbReference type="SMART" id="SM00320">
    <property type="entry name" value="WD40"/>
    <property type="match status" value="3"/>
</dbReference>
<dbReference type="SUPFAM" id="SSF50978">
    <property type="entry name" value="WD40 repeat-like"/>
    <property type="match status" value="1"/>
</dbReference>